<reference key="1">
    <citation type="journal article" date="2006" name="Lancet">
        <title>Complete genome sequence of USA300, an epidemic clone of community-acquired meticillin-resistant Staphylococcus aureus.</title>
        <authorList>
            <person name="Diep B.A."/>
            <person name="Gill S.R."/>
            <person name="Chang R.F."/>
            <person name="Phan T.H."/>
            <person name="Chen J.H."/>
            <person name="Davidson M.G."/>
            <person name="Lin F."/>
            <person name="Lin J."/>
            <person name="Carleton H.A."/>
            <person name="Mongodin E.F."/>
            <person name="Sensabaugh G.F."/>
            <person name="Perdreau-Remington F."/>
        </authorList>
    </citation>
    <scope>NUCLEOTIDE SEQUENCE [LARGE SCALE GENOMIC DNA]</scope>
    <source>
        <strain>USA300</strain>
    </source>
</reference>
<name>SYE_STAA3</name>
<organism>
    <name type="scientific">Staphylococcus aureus (strain USA300)</name>
    <dbReference type="NCBI Taxonomy" id="367830"/>
    <lineage>
        <taxon>Bacteria</taxon>
        <taxon>Bacillati</taxon>
        <taxon>Bacillota</taxon>
        <taxon>Bacilli</taxon>
        <taxon>Bacillales</taxon>
        <taxon>Staphylococcaceae</taxon>
        <taxon>Staphylococcus</taxon>
    </lineage>
</organism>
<accession>Q2FJB2</accession>
<keyword id="KW-0030">Aminoacyl-tRNA synthetase</keyword>
<keyword id="KW-0067">ATP-binding</keyword>
<keyword id="KW-0963">Cytoplasm</keyword>
<keyword id="KW-0436">Ligase</keyword>
<keyword id="KW-0547">Nucleotide-binding</keyword>
<keyword id="KW-0648">Protein biosynthesis</keyword>
<protein>
    <recommendedName>
        <fullName evidence="1">Glutamate--tRNA ligase</fullName>
        <ecNumber evidence="1">6.1.1.17</ecNumber>
    </recommendedName>
    <alternativeName>
        <fullName evidence="1">Glutamyl-tRNA synthetase</fullName>
        <shortName evidence="1">GluRS</shortName>
    </alternativeName>
</protein>
<proteinExistence type="inferred from homology"/>
<sequence>MSDRIRVRYAPSPTGYLHIGNARTALFNYLYAKHYNGDFVIRIEDTDKKRNLEDGETSQFDNLKWLGLDWDESVDKDNGYGPYRQSERQHIYQPLIDQLLAEDKAYKCYMTEEELEAEREAQIARGEMPRYGGQHAHLTEEQRQQFEAEGRQPSIRFRVPQNQTYSFDDMVKGNISFDSNGIGDWVIVKKDGIPTYNFAVAIDDHYMQISDVIRGDDHISNTPKQIMIYEAFGWEPPRFGHMSLIVNEERKKLSKRDGQILQFIEQYRDLGYLPEALFNFIALLGWSPEGEEEIFSKEEFIKIFDEKRLSKSPAFFDKQKLAWVNNQYMKQKDTETVFQLALPHLIKANLIPEVPSEEDLSWGRKLIALYQKEMSYAGEIVPLSEMFFKEMPALGEEEQQVINGEQVPELMTHLFSKLEALEPFEAAEIKKTIKEVQKETGIKGKQLFMPIRVAVTGQMHGPELPNTIEVLGKEKVLNRLKQYK</sequence>
<dbReference type="EC" id="6.1.1.17" evidence="1"/>
<dbReference type="EMBL" id="CP000255">
    <property type="protein sequence ID" value="ABD21711.1"/>
    <property type="molecule type" value="Genomic_DNA"/>
</dbReference>
<dbReference type="RefSeq" id="WP_001283792.1">
    <property type="nucleotide sequence ID" value="NZ_CP027476.1"/>
</dbReference>
<dbReference type="SMR" id="Q2FJB2"/>
<dbReference type="KEGG" id="saa:SAUSA300_0513"/>
<dbReference type="HOGENOM" id="CLU_015768_6_1_9"/>
<dbReference type="OMA" id="QAPRYDN"/>
<dbReference type="Proteomes" id="UP000001939">
    <property type="component" value="Chromosome"/>
</dbReference>
<dbReference type="GO" id="GO:0005829">
    <property type="term" value="C:cytosol"/>
    <property type="evidence" value="ECO:0007669"/>
    <property type="project" value="TreeGrafter"/>
</dbReference>
<dbReference type="GO" id="GO:0005524">
    <property type="term" value="F:ATP binding"/>
    <property type="evidence" value="ECO:0007669"/>
    <property type="project" value="UniProtKB-UniRule"/>
</dbReference>
<dbReference type="GO" id="GO:0004818">
    <property type="term" value="F:glutamate-tRNA ligase activity"/>
    <property type="evidence" value="ECO:0007669"/>
    <property type="project" value="UniProtKB-UniRule"/>
</dbReference>
<dbReference type="GO" id="GO:0000049">
    <property type="term" value="F:tRNA binding"/>
    <property type="evidence" value="ECO:0007669"/>
    <property type="project" value="InterPro"/>
</dbReference>
<dbReference type="GO" id="GO:0008270">
    <property type="term" value="F:zinc ion binding"/>
    <property type="evidence" value="ECO:0007669"/>
    <property type="project" value="InterPro"/>
</dbReference>
<dbReference type="GO" id="GO:0006424">
    <property type="term" value="P:glutamyl-tRNA aminoacylation"/>
    <property type="evidence" value="ECO:0007669"/>
    <property type="project" value="UniProtKB-UniRule"/>
</dbReference>
<dbReference type="CDD" id="cd00808">
    <property type="entry name" value="GluRS_core"/>
    <property type="match status" value="1"/>
</dbReference>
<dbReference type="FunFam" id="1.10.10.350:FF:000002">
    <property type="entry name" value="Glutamate--tRNA ligase"/>
    <property type="match status" value="1"/>
</dbReference>
<dbReference type="FunFam" id="3.40.50.620:FF:000007">
    <property type="entry name" value="Glutamate--tRNA ligase"/>
    <property type="match status" value="1"/>
</dbReference>
<dbReference type="Gene3D" id="1.10.10.350">
    <property type="match status" value="1"/>
</dbReference>
<dbReference type="Gene3D" id="3.40.50.620">
    <property type="entry name" value="HUPs"/>
    <property type="match status" value="1"/>
</dbReference>
<dbReference type="HAMAP" id="MF_00022">
    <property type="entry name" value="Glu_tRNA_synth_type1"/>
    <property type="match status" value="1"/>
</dbReference>
<dbReference type="InterPro" id="IPR045462">
    <property type="entry name" value="aa-tRNA-synth_I_cd-bd"/>
</dbReference>
<dbReference type="InterPro" id="IPR020751">
    <property type="entry name" value="aa-tRNA-synth_I_codon-bd_sub2"/>
</dbReference>
<dbReference type="InterPro" id="IPR001412">
    <property type="entry name" value="aa-tRNA-synth_I_CS"/>
</dbReference>
<dbReference type="InterPro" id="IPR008925">
    <property type="entry name" value="aa_tRNA-synth_I_cd-bd_sf"/>
</dbReference>
<dbReference type="InterPro" id="IPR004527">
    <property type="entry name" value="Glu-tRNA-ligase_bac/mito"/>
</dbReference>
<dbReference type="InterPro" id="IPR000924">
    <property type="entry name" value="Glu/Gln-tRNA-synth"/>
</dbReference>
<dbReference type="InterPro" id="IPR020058">
    <property type="entry name" value="Glu/Gln-tRNA-synth_Ib_cat-dom"/>
</dbReference>
<dbReference type="InterPro" id="IPR049940">
    <property type="entry name" value="GluQ/Sye"/>
</dbReference>
<dbReference type="InterPro" id="IPR033910">
    <property type="entry name" value="GluRS_core"/>
</dbReference>
<dbReference type="InterPro" id="IPR014729">
    <property type="entry name" value="Rossmann-like_a/b/a_fold"/>
</dbReference>
<dbReference type="NCBIfam" id="TIGR00464">
    <property type="entry name" value="gltX_bact"/>
    <property type="match status" value="1"/>
</dbReference>
<dbReference type="PANTHER" id="PTHR43311">
    <property type="entry name" value="GLUTAMATE--TRNA LIGASE"/>
    <property type="match status" value="1"/>
</dbReference>
<dbReference type="PANTHER" id="PTHR43311:SF2">
    <property type="entry name" value="GLUTAMATE--TRNA LIGASE, MITOCHONDRIAL-RELATED"/>
    <property type="match status" value="1"/>
</dbReference>
<dbReference type="Pfam" id="PF19269">
    <property type="entry name" value="Anticodon_2"/>
    <property type="match status" value="1"/>
</dbReference>
<dbReference type="Pfam" id="PF00749">
    <property type="entry name" value="tRNA-synt_1c"/>
    <property type="match status" value="1"/>
</dbReference>
<dbReference type="PRINTS" id="PR00987">
    <property type="entry name" value="TRNASYNTHGLU"/>
</dbReference>
<dbReference type="SUPFAM" id="SSF48163">
    <property type="entry name" value="An anticodon-binding domain of class I aminoacyl-tRNA synthetases"/>
    <property type="match status" value="1"/>
</dbReference>
<dbReference type="SUPFAM" id="SSF52374">
    <property type="entry name" value="Nucleotidylyl transferase"/>
    <property type="match status" value="1"/>
</dbReference>
<dbReference type="PROSITE" id="PS00178">
    <property type="entry name" value="AA_TRNA_LIGASE_I"/>
    <property type="match status" value="1"/>
</dbReference>
<comment type="function">
    <text evidence="1">Catalyzes the attachment of glutamate to tRNA(Glu) in a two-step reaction: glutamate is first activated by ATP to form Glu-AMP and then transferred to the acceptor end of tRNA(Glu).</text>
</comment>
<comment type="catalytic activity">
    <reaction evidence="1">
        <text>tRNA(Glu) + L-glutamate + ATP = L-glutamyl-tRNA(Glu) + AMP + diphosphate</text>
        <dbReference type="Rhea" id="RHEA:23540"/>
        <dbReference type="Rhea" id="RHEA-COMP:9663"/>
        <dbReference type="Rhea" id="RHEA-COMP:9680"/>
        <dbReference type="ChEBI" id="CHEBI:29985"/>
        <dbReference type="ChEBI" id="CHEBI:30616"/>
        <dbReference type="ChEBI" id="CHEBI:33019"/>
        <dbReference type="ChEBI" id="CHEBI:78442"/>
        <dbReference type="ChEBI" id="CHEBI:78520"/>
        <dbReference type="ChEBI" id="CHEBI:456215"/>
        <dbReference type="EC" id="6.1.1.17"/>
    </reaction>
</comment>
<comment type="subunit">
    <text evidence="1">Monomer.</text>
</comment>
<comment type="subcellular location">
    <subcellularLocation>
        <location evidence="1">Cytoplasm</location>
    </subcellularLocation>
</comment>
<comment type="similarity">
    <text evidence="1">Belongs to the class-I aminoacyl-tRNA synthetase family. Glutamate--tRNA ligase type 1 subfamily.</text>
</comment>
<evidence type="ECO:0000255" key="1">
    <source>
        <dbReference type="HAMAP-Rule" id="MF_00022"/>
    </source>
</evidence>
<gene>
    <name evidence="1" type="primary">gltX</name>
    <name type="ordered locus">SAUSA300_0513</name>
</gene>
<feature type="chain" id="PRO_0000237404" description="Glutamate--tRNA ligase">
    <location>
        <begin position="1"/>
        <end position="484"/>
    </location>
</feature>
<feature type="short sequence motif" description="'HIGH' region" evidence="1">
    <location>
        <begin position="11"/>
        <end position="21"/>
    </location>
</feature>
<feature type="short sequence motif" description="'KMSKS' region" evidence="1">
    <location>
        <begin position="252"/>
        <end position="256"/>
    </location>
</feature>
<feature type="binding site" evidence="1">
    <location>
        <position position="255"/>
    </location>
    <ligand>
        <name>ATP</name>
        <dbReference type="ChEBI" id="CHEBI:30616"/>
    </ligand>
</feature>